<feature type="chain" id="PRO_0000298658" description="Uncharacterized protein SERP1457">
    <location>
        <begin position="1"/>
        <end position="342"/>
    </location>
</feature>
<dbReference type="EMBL" id="CP000029">
    <property type="protein sequence ID" value="AAW54853.1"/>
    <property type="molecule type" value="Genomic_DNA"/>
</dbReference>
<dbReference type="RefSeq" id="WP_002468109.1">
    <property type="nucleotide sequence ID" value="NC_002976.3"/>
</dbReference>
<dbReference type="SMR" id="Q5HN15"/>
<dbReference type="STRING" id="176279.SERP1457"/>
<dbReference type="KEGG" id="ser:SERP1457"/>
<dbReference type="eggNOG" id="COG2706">
    <property type="taxonomic scope" value="Bacteria"/>
</dbReference>
<dbReference type="HOGENOM" id="CLU_038716_3_0_9"/>
<dbReference type="Proteomes" id="UP000000531">
    <property type="component" value="Chromosome"/>
</dbReference>
<dbReference type="GO" id="GO:0005829">
    <property type="term" value="C:cytosol"/>
    <property type="evidence" value="ECO:0007669"/>
    <property type="project" value="TreeGrafter"/>
</dbReference>
<dbReference type="GO" id="GO:0017057">
    <property type="term" value="F:6-phosphogluconolactonase activity"/>
    <property type="evidence" value="ECO:0007669"/>
    <property type="project" value="TreeGrafter"/>
</dbReference>
<dbReference type="Gene3D" id="2.130.10.10">
    <property type="entry name" value="YVTN repeat-like/Quinoprotein amine dehydrogenase"/>
    <property type="match status" value="1"/>
</dbReference>
<dbReference type="InterPro" id="IPR050282">
    <property type="entry name" value="Cycloisomerase_2"/>
</dbReference>
<dbReference type="InterPro" id="IPR011048">
    <property type="entry name" value="Haem_d1_sf"/>
</dbReference>
<dbReference type="InterPro" id="IPR019405">
    <property type="entry name" value="Lactonase_7-beta_prop"/>
</dbReference>
<dbReference type="InterPro" id="IPR015943">
    <property type="entry name" value="WD40/YVTN_repeat-like_dom_sf"/>
</dbReference>
<dbReference type="PANTHER" id="PTHR30344:SF1">
    <property type="entry name" value="6-PHOSPHOGLUCONOLACTONASE"/>
    <property type="match status" value="1"/>
</dbReference>
<dbReference type="PANTHER" id="PTHR30344">
    <property type="entry name" value="6-PHOSPHOGLUCONOLACTONASE-RELATED"/>
    <property type="match status" value="1"/>
</dbReference>
<dbReference type="Pfam" id="PF10282">
    <property type="entry name" value="Lactonase"/>
    <property type="match status" value="1"/>
</dbReference>
<dbReference type="SUPFAM" id="SSF51004">
    <property type="entry name" value="C-terminal (heme d1) domain of cytochrome cd1-nitrite reductase"/>
    <property type="match status" value="1"/>
</dbReference>
<evidence type="ECO:0000305" key="1"/>
<accession>Q5HN15</accession>
<protein>
    <recommendedName>
        <fullName>Uncharacterized protein SERP1457</fullName>
    </recommendedName>
</protein>
<keyword id="KW-1185">Reference proteome</keyword>
<organism>
    <name type="scientific">Staphylococcus epidermidis (strain ATCC 35984 / DSM 28319 / BCRC 17069 / CCUG 31568 / BM 3577 / RP62A)</name>
    <dbReference type="NCBI Taxonomy" id="176279"/>
    <lineage>
        <taxon>Bacteria</taxon>
        <taxon>Bacillati</taxon>
        <taxon>Bacillota</taxon>
        <taxon>Bacilli</taxon>
        <taxon>Bacillales</taxon>
        <taxon>Staphylococcaceae</taxon>
        <taxon>Staphylococcus</taxon>
    </lineage>
</organism>
<reference key="1">
    <citation type="journal article" date="2005" name="J. Bacteriol.">
        <title>Insights on evolution of virulence and resistance from the complete genome analysis of an early methicillin-resistant Staphylococcus aureus strain and a biofilm-producing methicillin-resistant Staphylococcus epidermidis strain.</title>
        <authorList>
            <person name="Gill S.R."/>
            <person name="Fouts D.E."/>
            <person name="Archer G.L."/>
            <person name="Mongodin E.F."/>
            <person name="DeBoy R.T."/>
            <person name="Ravel J."/>
            <person name="Paulsen I.T."/>
            <person name="Kolonay J.F."/>
            <person name="Brinkac L.M."/>
            <person name="Beanan M.J."/>
            <person name="Dodson R.J."/>
            <person name="Daugherty S.C."/>
            <person name="Madupu R."/>
            <person name="Angiuoli S.V."/>
            <person name="Durkin A.S."/>
            <person name="Haft D.H."/>
            <person name="Vamathevan J.J."/>
            <person name="Khouri H."/>
            <person name="Utterback T.R."/>
            <person name="Lee C."/>
            <person name="Dimitrov G."/>
            <person name="Jiang L."/>
            <person name="Qin H."/>
            <person name="Weidman J."/>
            <person name="Tran K."/>
            <person name="Kang K.H."/>
            <person name="Hance I.R."/>
            <person name="Nelson K.E."/>
            <person name="Fraser C.M."/>
        </authorList>
    </citation>
    <scope>NUCLEOTIDE SEQUENCE [LARGE SCALE GENOMIC DNA]</scope>
    <source>
        <strain>ATCC 35984 / DSM 28319 / BCRC 17069 / CCUG 31568 / BM 3577 / RP62A</strain>
    </source>
</reference>
<proteinExistence type="inferred from homology"/>
<comment type="similarity">
    <text evidence="1">Belongs to the cycloisomerase 2 family.</text>
</comment>
<name>Y1457_STAEQ</name>
<gene>
    <name type="ordered locus">SERP1457</name>
</gene>
<sequence length="342" mass="38283">MTLGYIGSYTKKSGKGIYRFKLNDETGVIEALETGYEIEASTYLTRNESFLYAITKEGEECGVASFSIKEDGQLELINKCLESKQGTGCYIQVSSNGKYLFEAVYGAGLARIYKLNQITGAIEKLIEELAHEFPTGSHERQDSSHVHFLNETPDHKYVVATDLGTDRVVTYKFGEDGLKQYAVSQFKNSDGPRHIAFSNDGRHAYIVHELSNEVSVTEYQDGKFIELERHSTIPSDFNGESKLAAVRLSHDGKHLYISNRGHDSIAIFEVLEDGRSLRSIEIQPSYDAFPRDFNITESDNYLICAHQEGESKVSIFERDNITGKLSLKDKKAIANEGVCVLL</sequence>